<comment type="function">
    <text>Flagellin is the subunit protein which polymerizes to form the filaments of bacterial flagella.</text>
</comment>
<comment type="subcellular location">
    <subcellularLocation>
        <location>Secreted</location>
    </subcellularLocation>
    <subcellularLocation>
        <location>Bacterial flagellum</location>
    </subcellularLocation>
</comment>
<comment type="miscellaneous">
    <text>Individual Salmonella serotypes usually alternate between the production of 2 antigenic forms of flagella, termed phase 1 and phase 2, each specified by separate structural genes.</text>
</comment>
<comment type="similarity">
    <text evidence="2">Belongs to the bacterial flagellin family.</text>
</comment>
<sequence>MAQVINTNSLSLLTQNNLNKSQSSLSSAIERLSSGLRINSAKDDAAGQAIANRFTSNIKGLTQASRNANDGISIAQTTEGALNEINNNLQRVRELSVQATNGTNSDSDLKSIQDEIQQRLEEIDRVSNQTQFNGVKVLSQDNQMKIQVGANDGETITIDLQKIDVKSLGLDGFNVNGPKEATVGDLKSSFKNVTGYDTYAAGADKYRVDINSGAVVTDAAAPDKVYVNAANGQLTTDDAENNTAVDLFKTTKSTAGTAEAKAIAGAIKGGKEGDTFDYKGVTFTIDTKTGDDGNGKVSTTINGEKVTLTVADIATGATDVNAATLQSSKNVYTSVVNGQFTFDDKTKNESAKLSDLEANNAVKGESKITVNGAEYTANATGDKITLAGKTMFIDKTASGVSTLINEDAAAAKKSTANPLASIDSALSKVDAVRSSLGAIQNRFDSAITNLGNTVTNLNSARSRIEDADYATEVSNMSKAQILQQAGTSVLAQANQVPQNVLSLLR</sequence>
<keyword id="KW-0975">Bacterial flagellum</keyword>
<keyword id="KW-0964">Secreted</keyword>
<feature type="initiator methionine" description="Removed" evidence="1">
    <location>
        <position position="1"/>
    </location>
</feature>
<feature type="chain" id="PRO_0000182568" description="Flagellin">
    <location>
        <begin position="2"/>
        <end position="505"/>
    </location>
</feature>
<protein>
    <recommendedName>
        <fullName>Flagellin</fullName>
    </recommendedName>
    <alternativeName>
        <fullName>Phase 1-C flagellin</fullName>
    </alternativeName>
</protein>
<organism>
    <name type="scientific">Salmonella enteritidis</name>
    <dbReference type="NCBI Taxonomy" id="149539"/>
    <lineage>
        <taxon>Bacteria</taxon>
        <taxon>Pseudomonadati</taxon>
        <taxon>Pseudomonadota</taxon>
        <taxon>Gammaproteobacteria</taxon>
        <taxon>Enterobacterales</taxon>
        <taxon>Enterobacteriaceae</taxon>
        <taxon>Salmonella</taxon>
    </lineage>
</organism>
<name>FLIC_SALEN</name>
<proteinExistence type="inferred from homology"/>
<evidence type="ECO:0000250" key="1"/>
<evidence type="ECO:0000305" key="2"/>
<reference key="1">
    <citation type="journal article" date="1993" name="J. Bacteriol.">
        <title>Molecular analyses of the Salmonella g. flagellar antigen complex.</title>
        <authorList>
            <person name="Masten B.J."/>
            <person name="Joys T.M."/>
        </authorList>
    </citation>
    <scope>NUCLEOTIDE SEQUENCE [GENOMIC DNA]</scope>
    <source>
        <strain>ATCC 13076 / CDC K-1891</strain>
    </source>
</reference>
<dbReference type="EMBL" id="Z15068">
    <property type="protein sequence ID" value="CAA78777.1"/>
    <property type="molecule type" value="Genomic_DNA"/>
</dbReference>
<dbReference type="PIR" id="S33189">
    <property type="entry name" value="S33189"/>
</dbReference>
<dbReference type="RefSeq" id="WP_000079833.1">
    <property type="nucleotide sequence ID" value="NZ_WIDA01000003.1"/>
</dbReference>
<dbReference type="SMR" id="Q06972"/>
<dbReference type="OMA" id="IASQTTY"/>
<dbReference type="GO" id="GO:0009288">
    <property type="term" value="C:bacterial-type flagellum"/>
    <property type="evidence" value="ECO:0007669"/>
    <property type="project" value="UniProtKB-SubCell"/>
</dbReference>
<dbReference type="GO" id="GO:0005576">
    <property type="term" value="C:extracellular region"/>
    <property type="evidence" value="ECO:0007669"/>
    <property type="project" value="UniProtKB-SubCell"/>
</dbReference>
<dbReference type="GO" id="GO:0005198">
    <property type="term" value="F:structural molecule activity"/>
    <property type="evidence" value="ECO:0007669"/>
    <property type="project" value="InterPro"/>
</dbReference>
<dbReference type="Gene3D" id="6.10.280.190">
    <property type="match status" value="1"/>
</dbReference>
<dbReference type="Gene3D" id="2.30.220.10">
    <property type="entry name" value="f41 fragment of flagellin, C-terminal domain"/>
    <property type="match status" value="1"/>
</dbReference>
<dbReference type="Gene3D" id="2.170.280.10">
    <property type="entry name" value="f41 fragment of flagellin, middle domain"/>
    <property type="match status" value="1"/>
</dbReference>
<dbReference type="Gene3D" id="1.20.1330.10">
    <property type="entry name" value="f41 fragment of flagellin, N-terminal domain"/>
    <property type="match status" value="1"/>
</dbReference>
<dbReference type="Gene3D" id="6.10.10.10">
    <property type="entry name" value="Flagellar export chaperone, C-terminal domain"/>
    <property type="match status" value="1"/>
</dbReference>
<dbReference type="InterPro" id="IPR001492">
    <property type="entry name" value="Flagellin"/>
</dbReference>
<dbReference type="InterPro" id="IPR046358">
    <property type="entry name" value="Flagellin_C"/>
</dbReference>
<dbReference type="InterPro" id="IPR042187">
    <property type="entry name" value="Flagellin_C_sub2"/>
</dbReference>
<dbReference type="InterPro" id="IPR001029">
    <property type="entry name" value="Flagellin_N"/>
</dbReference>
<dbReference type="PANTHER" id="PTHR42792">
    <property type="entry name" value="FLAGELLIN"/>
    <property type="match status" value="1"/>
</dbReference>
<dbReference type="PANTHER" id="PTHR42792:SF2">
    <property type="entry name" value="FLAGELLIN"/>
    <property type="match status" value="1"/>
</dbReference>
<dbReference type="Pfam" id="PF00700">
    <property type="entry name" value="Flagellin_C"/>
    <property type="match status" value="1"/>
</dbReference>
<dbReference type="Pfam" id="PF00669">
    <property type="entry name" value="Flagellin_N"/>
    <property type="match status" value="1"/>
</dbReference>
<dbReference type="Pfam" id="PF22370">
    <property type="entry name" value="FliC-like_3rd"/>
    <property type="match status" value="1"/>
</dbReference>
<dbReference type="PRINTS" id="PR00207">
    <property type="entry name" value="FLAGELLIN"/>
</dbReference>
<dbReference type="SUPFAM" id="SSF64518">
    <property type="entry name" value="Phase 1 flagellin"/>
    <property type="match status" value="1"/>
</dbReference>
<accession>Q06972</accession>
<gene>
    <name type="primary">fliC</name>
</gene>